<organism evidence="10">
    <name type="scientific">Influenza A virus (strain A/Blue-winged teal/Minnesota/993/1980 H6N6)</name>
    <dbReference type="NCBI Taxonomy" id="352510"/>
    <lineage>
        <taxon>Viruses</taxon>
        <taxon>Riboviria</taxon>
        <taxon>Orthornavirae</taxon>
        <taxon>Negarnaviricota</taxon>
        <taxon>Polyploviricotina</taxon>
        <taxon>Insthoviricetes</taxon>
        <taxon>Articulavirales</taxon>
        <taxon>Orthomyxoviridae</taxon>
        <taxon>Alphainfluenzavirus</taxon>
        <taxon>Alphainfluenzavirus influenzae</taxon>
        <taxon>Influenza A virus</taxon>
    </lineage>
</organism>
<evidence type="ECO:0000250" key="1">
    <source>
        <dbReference type="UniProtKB" id="Q2LN46"/>
    </source>
</evidence>
<evidence type="ECO:0000255" key="2">
    <source>
        <dbReference type="HAMAP-Rule" id="MF_04066"/>
    </source>
</evidence>
<evidence type="ECO:0000255" key="3">
    <source>
        <dbReference type="RuleBase" id="RU362113"/>
    </source>
</evidence>
<evidence type="ECO:0000256" key="4">
    <source>
        <dbReference type="SAM" id="MobiDB-lite"/>
    </source>
</evidence>
<evidence type="ECO:0000269" key="5">
    <source>
    </source>
</evidence>
<evidence type="ECO:0000269" key="6">
    <source>
    </source>
</evidence>
<evidence type="ECO:0000269" key="7">
    <source>
    </source>
</evidence>
<evidence type="ECO:0000305" key="8"/>
<evidence type="ECO:0000312" key="9">
    <source>
        <dbReference type="EMBL" id="ABB21788.1"/>
    </source>
</evidence>
<evidence type="ECO:0000312" key="10">
    <source>
        <dbReference type="Proteomes" id="UP000101522"/>
    </source>
</evidence>
<evidence type="ECO:0007744" key="11">
    <source>
        <dbReference type="PDB" id="4OPA"/>
    </source>
</evidence>
<evidence type="ECO:0007744" key="12">
    <source>
        <dbReference type="PDB" id="4OPH"/>
    </source>
</evidence>
<evidence type="ECO:0007744" key="13">
    <source>
        <dbReference type="PDB" id="6OQE"/>
    </source>
</evidence>
<evidence type="ECO:0007829" key="14">
    <source>
        <dbReference type="PDB" id="4OPA"/>
    </source>
</evidence>
<evidence type="ECO:0007829" key="15">
    <source>
        <dbReference type="PDB" id="4OPH"/>
    </source>
</evidence>
<proteinExistence type="evidence at protein level"/>
<name>NS1_I80AE</name>
<keyword id="KW-0002">3D-structure</keyword>
<keyword id="KW-1262">Eukaryotic host gene expression shutoff by virus</keyword>
<keyword id="KW-1035">Host cytoplasm</keyword>
<keyword id="KW-1190">Host gene expression shutoff by virus</keyword>
<keyword id="KW-1192">Host mRNA suppression by virus</keyword>
<keyword id="KW-1048">Host nucleus</keyword>
<keyword id="KW-0945">Host-virus interaction</keyword>
<keyword id="KW-1090">Inhibition of host innate immune response by virus</keyword>
<keyword id="KW-1114">Inhibition of host interferon signaling pathway by virus</keyword>
<keyword id="KW-1102">Inhibition of host PKR by virus</keyword>
<keyword id="KW-1103">Inhibition of host pre-mRNA processing by virus</keyword>
<keyword id="KW-1088">Inhibition of host RIG-I by virus</keyword>
<keyword id="KW-1113">Inhibition of host RLR pathway by virus</keyword>
<keyword id="KW-0922">Interferon antiviral system evasion</keyword>
<keyword id="KW-0694">RNA-binding</keyword>
<keyword id="KW-0899">Viral immunoevasion</keyword>
<comment type="function">
    <text evidence="1 3">Inhibits post-transcriptional processing of cellular pre-mRNA, by binding and inhibiting two cellular proteins that are required for the 3'-end processing of cellular pre-mRNAs: the 30 kDa cleavage and polyadenylation specificity factor/CPSF4 and the poly(A)-binding protein 2/PABPN1. In turn, unprocessed 3' end pre-mRNAs accumulate in the host nucleus and are no longer exported to the cytoplasm. Cellular protein synthesis is thereby shut off very early after virus infection. Viral protein synthesis is not affected by the inhibition of the cellular 3' end processing machinery because the poly(A) tails of viral mRNAs are produced by the viral polymerase through a stuttering mechanism. Prevents the establishment of the cellular antiviral state by inhibiting TRIM25-mediated RIGI ubiquitination, which normally triggers the antiviral transduction signal that leads to the activation of type I IFN genes by transcription factors IRF3 and IRF7. Also binds poly(A) and U6 snRNA. Inhibits the integrated stress response (ISR) in the infected cell by blocking dsRNA binding by EIF2AK2/PKR and further phosphorylation of EIF2S1/EIF-2ALPHA. Stress granule formation is thus inhibited, which allows protein synthesis and viral replication (By similarity). Disrupts host epithelial cell layer permeability via sequestering human DLG1 and SCRIB away from the cell membrane and thereby disrupting cell-cell adhesion (By similarity).</text>
</comment>
<comment type="subunit">
    <text evidence="3 5 6 7">Forms homodimers and higher-order oligomers (PubMed:24478439, PubMed:31375595). Interacts with host TRIM25 (via coiled coil); this interaction specifically inhibits TRIM25 multimerization and TRIM25-mediated RIGI CARD ubiquitination. Interacts with human EIF2AK2/PKR, CPSF4, IVNS1ABP and PABPN1 (By similarity). Interacts with human DLG1 (via PDZ domains 1 and 2) and human SCRIB; the interaction results in the translocation of DLG1 and SCRIB from the cell membrane to perinuclear puncta (PubMed:21849460). Interacts indirectly with human LIN7C via its interaction with DLG1, the interaction facilitates translocation of LIN7C to cytoplasmic puncta (PubMed:21849460).</text>
</comment>
<comment type="subcellular location">
    <subcellularLocation>
        <location evidence="3 5">Host nucleus</location>
    </subcellularLocation>
    <subcellularLocation>
        <location evidence="3 5">Host cytoplasm</location>
    </subcellularLocation>
</comment>
<comment type="domain">
    <text evidence="3">The dsRNA-binding region is required for suppression of RNA silencing.</text>
</comment>
<comment type="similarity">
    <text evidence="3">Belongs to the influenza A viruses NS1 family.</text>
</comment>
<feature type="chain" id="PRO_0000461034" description="Non-structural protein 1">
    <location>
        <begin position="1"/>
        <end position="230"/>
    </location>
</feature>
<feature type="region of interest" description="RNA-binding and homodimerization" evidence="2">
    <location>
        <begin position="1"/>
        <end position="73"/>
    </location>
</feature>
<feature type="region of interest" description="CPSF4-binding" evidence="2">
    <location>
        <begin position="180"/>
        <end position="215"/>
    </location>
</feature>
<feature type="region of interest" description="Disordered" evidence="4">
    <location>
        <begin position="205"/>
        <end position="230"/>
    </location>
</feature>
<feature type="region of interest" description="PABPN1-binding" evidence="2">
    <location>
        <begin position="223"/>
        <end position="230"/>
    </location>
</feature>
<feature type="short sequence motif" description="Nuclear localization signal" evidence="2">
    <location>
        <begin position="34"/>
        <end position="38"/>
    </location>
</feature>
<feature type="short sequence motif" description="Nuclear export signal" evidence="2">
    <location>
        <begin position="137"/>
        <end position="146"/>
    </location>
</feature>
<feature type="mutagenesis site" description="Abolishes the formation of closed homodimers, open homodimers are still able to form; when associated with 80-84 del." evidence="7">
    <original>E</original>
    <variation>G</variation>
    <location>
        <position position="71"/>
    </location>
</feature>
<feature type="mutagenesis site" description="Abolishes the formation of open homodimers, closed homodimers are still able to form. Abolishes the formation of closed homodimers, open homodimers are still able to form; when associated with G-71." evidence="6 7">
    <location>
        <begin position="80"/>
        <end position="84"/>
    </location>
</feature>
<feature type="mutagenesis site" description="No effect on oligomerization." evidence="6">
    <original>W</original>
    <variation>Y</variation>
    <location>
        <position position="187"/>
    </location>
</feature>
<feature type="mutagenesis site" description="Abolishes interaction with human SCRIB, DLG1 and LIN7C." evidence="5">
    <original>V</original>
    <variation>A</variation>
    <location>
        <position position="230"/>
    </location>
</feature>
<feature type="helix" evidence="14">
    <location>
        <begin position="3"/>
        <end position="24"/>
    </location>
</feature>
<feature type="helix" evidence="14">
    <location>
        <begin position="30"/>
        <end position="50"/>
    </location>
</feature>
<feature type="helix" evidence="14">
    <location>
        <begin position="54"/>
        <end position="71"/>
    </location>
</feature>
<feature type="helix" evidence="14">
    <location>
        <begin position="75"/>
        <end position="77"/>
    </location>
</feature>
<feature type="strand" evidence="14">
    <location>
        <begin position="87"/>
        <end position="91"/>
    </location>
</feature>
<feature type="helix" evidence="14">
    <location>
        <begin position="95"/>
        <end position="99"/>
    </location>
</feature>
<feature type="strand" evidence="14">
    <location>
        <begin position="105"/>
        <end position="111"/>
    </location>
</feature>
<feature type="strand" evidence="14">
    <location>
        <begin position="113"/>
        <end position="120"/>
    </location>
</feature>
<feature type="strand" evidence="14">
    <location>
        <begin position="127"/>
        <end position="137"/>
    </location>
</feature>
<feature type="strand" evidence="14">
    <location>
        <begin position="140"/>
        <end position="151"/>
    </location>
</feature>
<feature type="strand" evidence="15">
    <location>
        <begin position="152"/>
        <end position="154"/>
    </location>
</feature>
<feature type="strand" evidence="14">
    <location>
        <begin position="156"/>
        <end position="162"/>
    </location>
</feature>
<feature type="helix" evidence="14">
    <location>
        <begin position="171"/>
        <end position="187"/>
    </location>
</feature>
<feature type="strand" evidence="14">
    <location>
        <begin position="191"/>
        <end position="194"/>
    </location>
</feature>
<feature type="helix" evidence="14">
    <location>
        <begin position="196"/>
        <end position="200"/>
    </location>
</feature>
<gene>
    <name evidence="9" type="primary">NS1</name>
    <name evidence="3" type="synonym">NS</name>
</gene>
<reference evidence="9 10" key="1">
    <citation type="journal article" date="2006" name="Science">
        <title>Large-scale sequence analysis of avian influenza isolates.</title>
        <authorList>
            <person name="Obenauer J.C."/>
            <person name="Denson J."/>
            <person name="Mehta P.K."/>
            <person name="Su X."/>
            <person name="Mukatira S."/>
            <person name="Finkelstein D.B."/>
            <person name="Xu X."/>
            <person name="Wang J."/>
            <person name="Ma J."/>
            <person name="Fan Y."/>
            <person name="Rakestraw K.M."/>
            <person name="Webster R.G."/>
            <person name="Hoffmann E."/>
            <person name="Krauss S."/>
            <person name="Zheng J."/>
            <person name="Zhang Z."/>
            <person name="Naeve C.W."/>
        </authorList>
    </citation>
    <scope>NUCLEOTIDE SEQUENCE [LARGE SCALE GENOMIC DNA]</scope>
    <source>
        <strain evidence="9">A/blue-winged teal/MN/993/1980</strain>
    </source>
</reference>
<reference evidence="8" key="2">
    <citation type="journal article" date="2011" name="J. Virol.">
        <title>The avian influenza virus NS1 ESEV PDZ binding motif associates with Dlg1 and Scribble to disrupt cellular tight junctions.</title>
        <authorList>
            <person name="Golebiewski L."/>
            <person name="Liu H."/>
            <person name="Javier R.T."/>
            <person name="Rice A.P."/>
        </authorList>
    </citation>
    <scope>INTERACTION WITH HUMAN DLG1; SCRIB AND LIN7C</scope>
    <scope>SUBCELLULAR LOCATION</scope>
    <scope>MUTAGENESIS OF VAL-230</scope>
</reference>
<reference evidence="11 12" key="3">
    <citation type="journal article" date="2014" name="J. Virol.">
        <title>The influenza A virus protein NS1 displays structural polymorphism.</title>
        <authorList>
            <person name="Carrillo B."/>
            <person name="Choi J.M."/>
            <person name="Bornholdt Z.A."/>
            <person name="Sankaran B."/>
            <person name="Rice A.P."/>
            <person name="Prasad B.V."/>
        </authorList>
    </citation>
    <scope>X-RAY CRYSTALLOGRAPHY (2.70 ANGSTROMS)</scope>
    <scope>SUBUNIT</scope>
    <scope>MUTAGENESIS OF 80-THR--VAL-84 AND TRP-187</scope>
</reference>
<reference evidence="13" key="4">
    <citation type="journal article" date="2019" name="J. Virol.">
        <title>Influenza A Virus Protein NS1 Exhibits Strain-Independent Conformational Plasticity.</title>
        <authorList>
            <person name="Mitra S."/>
            <person name="Kumar D."/>
            <person name="Hu L."/>
            <person name="Sankaran B."/>
            <person name="Moosa M.M."/>
            <person name="Rice A.P."/>
            <person name="Ferreon J.C."/>
            <person name="Ferreon A.C.M."/>
            <person name="Prasad B.V.V."/>
        </authorList>
    </citation>
    <scope>X-RAY CRYSTALLOGRAPHY (3.90 ANGSTROMS)</scope>
    <scope>SUBUNIT</scope>
    <scope>MUTAGENESIS OF GLU-71 AND 80-THR--VAL-84</scope>
</reference>
<sequence>MDSNTVSSFQVDCFLWHVRKRFADQELGDAPFLDRLRRDQKSLRGRGSTLGLDIETATRAGKQIVERILEEESDEALKMTIASVPASRYLTDMTLEEMSRDWFMLMPKQKVAGSLCIRMDQAIMDKNIILKANFSVIFDRLETLILLRAFTEEGAIVGEISPLPSLPGHTDEDVKNAIGVLIGGLEWNDNTVRVSETLQRFAWRSSNEDGRPPLPPNQKRKMARTIESEV</sequence>
<dbReference type="EMBL" id="CY005885">
    <property type="protein sequence ID" value="ABB21788.1"/>
    <property type="molecule type" value="Viral_cRNA"/>
</dbReference>
<dbReference type="PDB" id="4OPA">
    <property type="method" value="X-ray"/>
    <property type="resolution" value="2.70 A"/>
    <property type="chains" value="A/B=1-230"/>
</dbReference>
<dbReference type="PDB" id="4OPH">
    <property type="method" value="X-ray"/>
    <property type="resolution" value="3.16 A"/>
    <property type="chains" value="A=1-230"/>
</dbReference>
<dbReference type="PDB" id="6OQE">
    <property type="method" value="X-ray"/>
    <property type="resolution" value="3.90 A"/>
    <property type="chains" value="A=1-230"/>
</dbReference>
<dbReference type="PDBsum" id="4OPA"/>
<dbReference type="PDBsum" id="4OPH"/>
<dbReference type="PDBsum" id="6OQE"/>
<dbReference type="SMR" id="Q20NS3"/>
<dbReference type="Proteomes" id="UP000101522">
    <property type="component" value="Genome"/>
</dbReference>
<dbReference type="GO" id="GO:0030430">
    <property type="term" value="C:host cell cytoplasm"/>
    <property type="evidence" value="ECO:0000314"/>
    <property type="project" value="UniProtKB"/>
</dbReference>
<dbReference type="GO" id="GO:0042025">
    <property type="term" value="C:host cell nucleus"/>
    <property type="evidence" value="ECO:0000314"/>
    <property type="project" value="UniProtKB"/>
</dbReference>
<dbReference type="GO" id="GO:0030291">
    <property type="term" value="F:protein serine/threonine kinase inhibitor activity"/>
    <property type="evidence" value="ECO:0007669"/>
    <property type="project" value="UniProtKB-KW"/>
</dbReference>
<dbReference type="GO" id="GO:0003723">
    <property type="term" value="F:RNA binding"/>
    <property type="evidence" value="ECO:0007669"/>
    <property type="project" value="UniProtKB-KW"/>
</dbReference>
<dbReference type="GO" id="GO:0039540">
    <property type="term" value="P:symbiont-mediated suppression of host cytoplasmic pattern recognition receptor signaling pathway via inhibition of RIG-I activity"/>
    <property type="evidence" value="ECO:0007669"/>
    <property type="project" value="UniProtKB-KW"/>
</dbReference>
<dbReference type="GO" id="GO:0039657">
    <property type="term" value="P:symbiont-mediated suppression of host gene expression"/>
    <property type="evidence" value="ECO:0007669"/>
    <property type="project" value="UniProtKB-KW"/>
</dbReference>
<dbReference type="GO" id="GO:0039524">
    <property type="term" value="P:symbiont-mediated suppression of host mRNA processing"/>
    <property type="evidence" value="ECO:0007669"/>
    <property type="project" value="UniProtKB-KW"/>
</dbReference>
<dbReference type="GO" id="GO:0039580">
    <property type="term" value="P:symbiont-mediated suppression of host PKR/eIFalpha signaling"/>
    <property type="evidence" value="ECO:0007669"/>
    <property type="project" value="UniProtKB-KW"/>
</dbReference>
<dbReference type="GO" id="GO:0039502">
    <property type="term" value="P:symbiont-mediated suppression of host type I interferon-mediated signaling pathway"/>
    <property type="evidence" value="ECO:0007669"/>
    <property type="project" value="UniProtKB-KW"/>
</dbReference>
<dbReference type="FunFam" id="1.10.287.10:FF:000001">
    <property type="entry name" value="Non-structural protein 1"/>
    <property type="match status" value="1"/>
</dbReference>
<dbReference type="FunFam" id="3.30.420.330:FF:000001">
    <property type="entry name" value="Non-structural protein 1"/>
    <property type="match status" value="1"/>
</dbReference>
<dbReference type="Gene3D" id="3.30.420.330">
    <property type="entry name" value="Influenza virus non-structural protein, effector domain"/>
    <property type="match status" value="1"/>
</dbReference>
<dbReference type="Gene3D" id="1.10.287.10">
    <property type="entry name" value="S15/NS1, RNA-binding"/>
    <property type="match status" value="1"/>
</dbReference>
<dbReference type="HAMAP" id="MF_04066">
    <property type="entry name" value="INFV_NS1"/>
    <property type="match status" value="1"/>
</dbReference>
<dbReference type="InterPro" id="IPR004208">
    <property type="entry name" value="NS1"/>
</dbReference>
<dbReference type="InterPro" id="IPR000256">
    <property type="entry name" value="NS1A"/>
</dbReference>
<dbReference type="InterPro" id="IPR038064">
    <property type="entry name" value="NS1A_effect_dom-like_sf"/>
</dbReference>
<dbReference type="InterPro" id="IPR009068">
    <property type="entry name" value="uS15_NS1_RNA-bd_sf"/>
</dbReference>
<dbReference type="Pfam" id="PF00600">
    <property type="entry name" value="Flu_NS1"/>
    <property type="match status" value="1"/>
</dbReference>
<dbReference type="SUPFAM" id="SSF143021">
    <property type="entry name" value="Ns1 effector domain-like"/>
    <property type="match status" value="1"/>
</dbReference>
<dbReference type="SUPFAM" id="SSF47060">
    <property type="entry name" value="S15/NS1 RNA-binding domain"/>
    <property type="match status" value="1"/>
</dbReference>
<organismHost>
    <name type="scientific">Spatula discors</name>
    <name type="common">Blue-winged teal</name>
    <name type="synonym">Anas discors</name>
    <dbReference type="NCBI Taxonomy" id="75842"/>
</organismHost>
<protein>
    <recommendedName>
        <fullName evidence="3">Non-structural protein 1</fullName>
        <shortName evidence="3">NS1</shortName>
    </recommendedName>
</protein>
<accession>Q20NS3</accession>